<organism>
    <name type="scientific">Oryza sativa subsp. indica</name>
    <name type="common">Rice</name>
    <dbReference type="NCBI Taxonomy" id="39946"/>
    <lineage>
        <taxon>Eukaryota</taxon>
        <taxon>Viridiplantae</taxon>
        <taxon>Streptophyta</taxon>
        <taxon>Embryophyta</taxon>
        <taxon>Tracheophyta</taxon>
        <taxon>Spermatophyta</taxon>
        <taxon>Magnoliopsida</taxon>
        <taxon>Liliopsida</taxon>
        <taxon>Poales</taxon>
        <taxon>Poaceae</taxon>
        <taxon>BOP clade</taxon>
        <taxon>Oryzoideae</taxon>
        <taxon>Oryzeae</taxon>
        <taxon>Oryzinae</taxon>
        <taxon>Oryza</taxon>
        <taxon>Oryza sativa</taxon>
    </lineage>
</organism>
<evidence type="ECO:0000250" key="1"/>
<evidence type="ECO:0000255" key="2"/>
<evidence type="ECO:0000305" key="3"/>
<name>MI25_ORYSI</name>
<comment type="function">
    <text evidence="1">This is one of the chains of the nonenzymatic component (CF(0) subunit) of the mitochondrial ATPase complex.</text>
</comment>
<comment type="subunit">
    <text evidence="1">F-type ATPases have 2 components, CF(1) - the catalytic core - and CF(0) - the membrane proton channel. CF(1) has five subunits: alpha(3), beta(3), gamma(1), delta(1), epsilon(1). CF(0) has three main subunits: a, b and c (By similarity).</text>
</comment>
<comment type="subcellular location">
    <subcellularLocation>
        <location evidence="1">Mitochondrion membrane</location>
        <topology evidence="1">Single-pass membrane protein</topology>
    </subcellularLocation>
</comment>
<comment type="similarity">
    <text evidence="3">Belongs to the ATPase protein MI25 family.</text>
</comment>
<protein>
    <recommendedName>
        <fullName>ATP synthase protein MI25</fullName>
    </recommendedName>
    <alternativeName>
        <fullName>ORF25</fullName>
    </alternativeName>
</protein>
<proteinExistence type="inferred from homology"/>
<dbReference type="EMBL" id="M74241">
    <property type="protein sequence ID" value="AAA66047.1"/>
    <property type="molecule type" value="Genomic_DNA"/>
</dbReference>
<dbReference type="PIR" id="S26876">
    <property type="entry name" value="S26876"/>
</dbReference>
<dbReference type="SMR" id="Q00058"/>
<dbReference type="GO" id="GO:0031966">
    <property type="term" value="C:mitochondrial membrane"/>
    <property type="evidence" value="ECO:0007669"/>
    <property type="project" value="UniProtKB-SubCell"/>
</dbReference>
<dbReference type="GO" id="GO:0005739">
    <property type="term" value="C:mitochondrion"/>
    <property type="evidence" value="ECO:0000250"/>
    <property type="project" value="Gramene"/>
</dbReference>
<dbReference type="GO" id="GO:0045259">
    <property type="term" value="C:proton-transporting ATP synthase complex"/>
    <property type="evidence" value="ECO:0007669"/>
    <property type="project" value="UniProtKB-KW"/>
</dbReference>
<dbReference type="GO" id="GO:0015078">
    <property type="term" value="F:proton transmembrane transporter activity"/>
    <property type="evidence" value="ECO:0007669"/>
    <property type="project" value="InterPro"/>
</dbReference>
<dbReference type="GO" id="GO:0015986">
    <property type="term" value="P:proton motive force-driven ATP synthesis"/>
    <property type="evidence" value="ECO:0007669"/>
    <property type="project" value="InterPro"/>
</dbReference>
<dbReference type="InterPro" id="IPR008688">
    <property type="entry name" value="ATP_synth_Bsub_B/MI25"/>
</dbReference>
<dbReference type="InterPro" id="IPR044988">
    <property type="entry name" value="MI25_plants"/>
</dbReference>
<dbReference type="PANTHER" id="PTHR37774:SF4">
    <property type="entry name" value="ATP SYNTHASE PROTEIN MI25"/>
    <property type="match status" value="1"/>
</dbReference>
<dbReference type="PANTHER" id="PTHR37774">
    <property type="entry name" value="ATP SYNTHASE PROTEIN MI25-RELATED"/>
    <property type="match status" value="1"/>
</dbReference>
<dbReference type="Pfam" id="PF05405">
    <property type="entry name" value="Mt_ATP-synt_B"/>
    <property type="match status" value="1"/>
</dbReference>
<accession>Q00058</accession>
<feature type="chain" id="PRO_0000096475" description="ATP synthase protein MI25">
    <location>
        <begin position="1"/>
        <end position="197"/>
    </location>
</feature>
<feature type="transmembrane region" description="Helical" evidence="2">
    <location>
        <begin position="30"/>
        <end position="50"/>
    </location>
</feature>
<reference key="1">
    <citation type="journal article" date="1992" name="Curr. Genet.">
        <title>Co-transcription of orf25 and coxIII in rice mitochondria.</title>
        <authorList>
            <person name="Liu A.W."/>
            <person name="Narayanan K.K."/>
            <person name="Andre C.P."/>
            <person name="Kaleikau E.K."/>
            <person name="Walbot V."/>
        </authorList>
    </citation>
    <scope>NUCLEOTIDE SEQUENCE [GENOMIC DNA]</scope>
    <source>
        <strain>cv. IR36</strain>
    </source>
</reference>
<keyword id="KW-0066">ATP synthesis</keyword>
<keyword id="KW-0138">CF(0)</keyword>
<keyword id="KW-0375">Hydrogen ion transport</keyword>
<keyword id="KW-0406">Ion transport</keyword>
<keyword id="KW-0472">Membrane</keyword>
<keyword id="KW-0496">Mitochondrion</keyword>
<keyword id="KW-0812">Transmembrane</keyword>
<keyword id="KW-1133">Transmembrane helix</keyword>
<keyword id="KW-0813">Transport</keyword>
<geneLocation type="mitochondrion"/>
<sequence length="197" mass="22088">MGLSSTDKKDRRNMLFAAIPSICASSPKKISIYNEEMIVARCFIGFLIFSRKSLGKTFKETLDGRIESIQEELQQFFNPKQVIPGESNEQQRLLRISLRICSAVVESLPTAACAPKCEKTVQALLCRNLNVKSATLLNATSSRRIRLQDDIVTGFHFSVSERFVSGSTFKASTVEQIREAFVPIDLIREGLIVLRKV</sequence>